<feature type="chain" id="PRO_0000346637" description="Cell division suppressor protein YneA">
    <location>
        <begin position="1"/>
        <end position="103"/>
    </location>
</feature>
<feature type="domain" description="LysM" evidence="2">
    <location>
        <begin position="36"/>
        <end position="87"/>
    </location>
</feature>
<comment type="function">
    <text evidence="1">Inhibits cell division during the SOS response. Affects a later stage of the cell division protein assembly, after the assembly of the Z ring, by probably suppressing recruitment of FtsL and/or DivIC to the division machinery.</text>
</comment>
<comment type="subcellular location">
    <subcellularLocation>
        <location evidence="1">Cytoplasm</location>
    </subcellularLocation>
</comment>
<comment type="similarity">
    <text evidence="1">Belongs to the YneA family.</text>
</comment>
<evidence type="ECO:0000255" key="1">
    <source>
        <dbReference type="HAMAP-Rule" id="MF_02014"/>
    </source>
</evidence>
<evidence type="ECO:0000255" key="2">
    <source>
        <dbReference type="PROSITE-ProRule" id="PRU01118"/>
    </source>
</evidence>
<gene>
    <name evidence="1" type="primary">yneA</name>
    <name type="ordered locus">RBAM_017660</name>
</gene>
<dbReference type="EMBL" id="CP000560">
    <property type="protein sequence ID" value="ABS74129.1"/>
    <property type="molecule type" value="Genomic_DNA"/>
</dbReference>
<dbReference type="RefSeq" id="WP_003154001.1">
    <property type="nucleotide sequence ID" value="NC_009725.2"/>
</dbReference>
<dbReference type="SMR" id="A7Z553"/>
<dbReference type="GeneID" id="93080898"/>
<dbReference type="KEGG" id="bay:RBAM_017660"/>
<dbReference type="HOGENOM" id="CLU_136034_4_0_9"/>
<dbReference type="Proteomes" id="UP000001120">
    <property type="component" value="Chromosome"/>
</dbReference>
<dbReference type="GO" id="GO:0005737">
    <property type="term" value="C:cytoplasm"/>
    <property type="evidence" value="ECO:0007669"/>
    <property type="project" value="UniProtKB-SubCell"/>
</dbReference>
<dbReference type="GO" id="GO:0000917">
    <property type="term" value="P:division septum assembly"/>
    <property type="evidence" value="ECO:0007669"/>
    <property type="project" value="UniProtKB-KW"/>
</dbReference>
<dbReference type="GO" id="GO:0006281">
    <property type="term" value="P:DNA repair"/>
    <property type="evidence" value="ECO:0007669"/>
    <property type="project" value="UniProtKB-KW"/>
</dbReference>
<dbReference type="GO" id="GO:0051782">
    <property type="term" value="P:negative regulation of cell division"/>
    <property type="evidence" value="ECO:0007669"/>
    <property type="project" value="UniProtKB-UniRule"/>
</dbReference>
<dbReference type="GO" id="GO:0009432">
    <property type="term" value="P:SOS response"/>
    <property type="evidence" value="ECO:0007669"/>
    <property type="project" value="UniProtKB-UniRule"/>
</dbReference>
<dbReference type="CDD" id="cd00118">
    <property type="entry name" value="LysM"/>
    <property type="match status" value="1"/>
</dbReference>
<dbReference type="Gene3D" id="3.10.350.10">
    <property type="entry name" value="LysM domain"/>
    <property type="match status" value="1"/>
</dbReference>
<dbReference type="HAMAP" id="MF_02014">
    <property type="entry name" value="YneA"/>
    <property type="match status" value="1"/>
</dbReference>
<dbReference type="InterPro" id="IPR022887">
    <property type="entry name" value="Cell_div_suppressor_YneA"/>
</dbReference>
<dbReference type="InterPro" id="IPR018392">
    <property type="entry name" value="LysM_dom"/>
</dbReference>
<dbReference type="InterPro" id="IPR036779">
    <property type="entry name" value="LysM_dom_sf"/>
</dbReference>
<dbReference type="NCBIfam" id="NF010723">
    <property type="entry name" value="PRK14125.1"/>
    <property type="match status" value="1"/>
</dbReference>
<dbReference type="Pfam" id="PF01476">
    <property type="entry name" value="LysM"/>
    <property type="match status" value="1"/>
</dbReference>
<dbReference type="SMART" id="SM00257">
    <property type="entry name" value="LysM"/>
    <property type="match status" value="1"/>
</dbReference>
<dbReference type="PROSITE" id="PS51782">
    <property type="entry name" value="LYSM"/>
    <property type="match status" value="1"/>
</dbReference>
<keyword id="KW-0131">Cell cycle</keyword>
<keyword id="KW-0132">Cell division</keyword>
<keyword id="KW-0963">Cytoplasm</keyword>
<keyword id="KW-0227">DNA damage</keyword>
<keyword id="KW-0234">DNA repair</keyword>
<keyword id="KW-0717">Septation</keyword>
<keyword id="KW-0742">SOS response</keyword>
<organism>
    <name type="scientific">Bacillus velezensis (strain DSM 23117 / BGSC 10A6 / LMG 26770 / FZB42)</name>
    <name type="common">Bacillus amyloliquefaciens subsp. plantarum</name>
    <dbReference type="NCBI Taxonomy" id="326423"/>
    <lineage>
        <taxon>Bacteria</taxon>
        <taxon>Bacillati</taxon>
        <taxon>Bacillota</taxon>
        <taxon>Bacilli</taxon>
        <taxon>Bacillales</taxon>
        <taxon>Bacillaceae</taxon>
        <taxon>Bacillus</taxon>
        <taxon>Bacillus amyloliquefaciens group</taxon>
    </lineage>
</organism>
<sequence length="103" mass="11440">MAKESIIFVGLFTAILSAAILLVSCAGNDQSLSQYVKIKVQDGDTLWSLADHVAEKKHINKEDFIEWVTENNHLQTADIKPGDELILPVKKKHPAVYQLAIVN</sequence>
<accession>A7Z553</accession>
<protein>
    <recommendedName>
        <fullName evidence="1">Cell division suppressor protein YneA</fullName>
    </recommendedName>
</protein>
<reference key="1">
    <citation type="journal article" date="2007" name="Nat. Biotechnol.">
        <title>Comparative analysis of the complete genome sequence of the plant growth-promoting bacterium Bacillus amyloliquefaciens FZB42.</title>
        <authorList>
            <person name="Chen X.H."/>
            <person name="Koumoutsi A."/>
            <person name="Scholz R."/>
            <person name="Eisenreich A."/>
            <person name="Schneider K."/>
            <person name="Heinemeyer I."/>
            <person name="Morgenstern B."/>
            <person name="Voss B."/>
            <person name="Hess W.R."/>
            <person name="Reva O."/>
            <person name="Junge H."/>
            <person name="Voigt B."/>
            <person name="Jungblut P.R."/>
            <person name="Vater J."/>
            <person name="Suessmuth R."/>
            <person name="Liesegang H."/>
            <person name="Strittmatter A."/>
            <person name="Gottschalk G."/>
            <person name="Borriss R."/>
        </authorList>
    </citation>
    <scope>NUCLEOTIDE SEQUENCE [LARGE SCALE GENOMIC DNA]</scope>
    <source>
        <strain>DSM 23117 / BGSC 10A6 / LMG 26770 / FZB42</strain>
    </source>
</reference>
<name>YNEA_BACVZ</name>
<proteinExistence type="inferred from homology"/>